<comment type="function">
    <text evidence="2">Involved in the maturation of mitochondrial 4Fe-4S proteins functioning late in the iron-sulfur cluster assembly pathway. Probably involved in the binding of an intermediate of Fe/S cluster assembly.</text>
</comment>
<comment type="subcellular location">
    <subcellularLocation>
        <location evidence="2">Mitochondrion</location>
    </subcellularLocation>
</comment>
<comment type="similarity">
    <text evidence="4">Belongs to the HesB/IscA family.</text>
</comment>
<sequence length="129" mass="14248">MSASIARATVRAVSRRKILSTRAALTLTPSAVNKVKQLLDNKPEYIGLKVGVRTRGCNGLTYTLDYTKNKEQSDEEVLQDGVRVFIEKKAQLTLLGTEMDFVETKLSSEFVFNNPNIKGTCGCGESFNI</sequence>
<reference key="1">
    <citation type="submission" date="2005-06" db="EMBL/GenBank/DDBJ databases">
        <authorList>
            <consortium name="NIH - Zebrafish Gene Collection (ZGC) project"/>
        </authorList>
    </citation>
    <scope>NUCLEOTIDE SEQUENCE [LARGE SCALE MRNA]</scope>
    <source>
        <tissue>Larva</tissue>
    </source>
</reference>
<gene>
    <name type="primary">isca1</name>
    <name type="synonym">hbld2</name>
    <name type="ORF">zgc:114185</name>
</gene>
<protein>
    <recommendedName>
        <fullName>Iron-sulfur cluster assembly 1 homolog, mitochondrial</fullName>
    </recommendedName>
    <alternativeName>
        <fullName>HESB-like domain-containing protein 2</fullName>
    </alternativeName>
    <alternativeName>
        <fullName>Iron-sulfur assembly protein IscA</fullName>
    </alternativeName>
</protein>
<feature type="transit peptide" description="Mitochondrion" evidence="3">
    <location>
        <begin position="1"/>
        <end position="12"/>
    </location>
</feature>
<feature type="chain" id="PRO_0000042739" description="Iron-sulfur cluster assembly 1 homolog, mitochondrial">
    <location>
        <begin position="13"/>
        <end position="129"/>
    </location>
</feature>
<feature type="binding site" evidence="1">
    <location>
        <position position="57"/>
    </location>
    <ligand>
        <name>Fe cation</name>
        <dbReference type="ChEBI" id="CHEBI:24875"/>
    </ligand>
</feature>
<feature type="binding site" evidence="1">
    <location>
        <position position="121"/>
    </location>
    <ligand>
        <name>Fe cation</name>
        <dbReference type="ChEBI" id="CHEBI:24875"/>
    </ligand>
</feature>
<feature type="binding site" evidence="1">
    <location>
        <position position="123"/>
    </location>
    <ligand>
        <name>Fe cation</name>
        <dbReference type="ChEBI" id="CHEBI:24875"/>
    </ligand>
</feature>
<proteinExistence type="evidence at transcript level"/>
<keyword id="KW-0408">Iron</keyword>
<keyword id="KW-0411">Iron-sulfur</keyword>
<keyword id="KW-0479">Metal-binding</keyword>
<keyword id="KW-0496">Mitochondrion</keyword>
<keyword id="KW-1185">Reference proteome</keyword>
<keyword id="KW-0809">Transit peptide</keyword>
<evidence type="ECO:0000250" key="1">
    <source>
        <dbReference type="UniProtKB" id="P0AAC8"/>
    </source>
</evidence>
<evidence type="ECO:0000250" key="2">
    <source>
        <dbReference type="UniProtKB" id="Q9BUE6"/>
    </source>
</evidence>
<evidence type="ECO:0000255" key="3"/>
<evidence type="ECO:0000305" key="4"/>
<dbReference type="EMBL" id="BC097234">
    <property type="protein sequence ID" value="AAH97234.1"/>
    <property type="molecule type" value="mRNA"/>
</dbReference>
<dbReference type="RefSeq" id="NP_001020349.1">
    <property type="nucleotide sequence ID" value="NM_001025178.2"/>
</dbReference>
<dbReference type="SMR" id="Q4QRC6"/>
<dbReference type="FunCoup" id="Q4QRC6">
    <property type="interactions" value="728"/>
</dbReference>
<dbReference type="STRING" id="7955.ENSDARP00000068166"/>
<dbReference type="PaxDb" id="7955-ENSDARP00000068166"/>
<dbReference type="Ensembl" id="ENSDART00000073676">
    <property type="protein sequence ID" value="ENSDARP00000068166"/>
    <property type="gene ID" value="ENSDARG00000051956"/>
</dbReference>
<dbReference type="GeneID" id="573999"/>
<dbReference type="KEGG" id="dre:573999"/>
<dbReference type="AGR" id="ZFIN:ZDB-GENE-050626-94"/>
<dbReference type="CTD" id="81689"/>
<dbReference type="ZFIN" id="ZDB-GENE-050626-94">
    <property type="gene designation" value="isca1"/>
</dbReference>
<dbReference type="eggNOG" id="KOG1120">
    <property type="taxonomic scope" value="Eukaryota"/>
</dbReference>
<dbReference type="HOGENOM" id="CLU_069054_4_0_1"/>
<dbReference type="InParanoid" id="Q4QRC6"/>
<dbReference type="OMA" id="LYIYGMQ"/>
<dbReference type="OrthoDB" id="333486at2759"/>
<dbReference type="PhylomeDB" id="Q4QRC6"/>
<dbReference type="TreeFam" id="TF314956"/>
<dbReference type="PRO" id="PR:Q4QRC6"/>
<dbReference type="Proteomes" id="UP000000437">
    <property type="component" value="Chromosome 5"/>
</dbReference>
<dbReference type="Bgee" id="ENSDARG00000051956">
    <property type="expression patterns" value="Expressed in cardiac ventricle and 24 other cell types or tissues"/>
</dbReference>
<dbReference type="GO" id="GO:0005737">
    <property type="term" value="C:cytoplasm"/>
    <property type="evidence" value="ECO:0000318"/>
    <property type="project" value="GO_Central"/>
</dbReference>
<dbReference type="GO" id="GO:0005739">
    <property type="term" value="C:mitochondrion"/>
    <property type="evidence" value="ECO:0000318"/>
    <property type="project" value="GO_Central"/>
</dbReference>
<dbReference type="GO" id="GO:0051537">
    <property type="term" value="F:2 iron, 2 sulfur cluster binding"/>
    <property type="evidence" value="ECO:0000318"/>
    <property type="project" value="GO_Central"/>
</dbReference>
<dbReference type="GO" id="GO:0046872">
    <property type="term" value="F:metal ion binding"/>
    <property type="evidence" value="ECO:0007669"/>
    <property type="project" value="UniProtKB-KW"/>
</dbReference>
<dbReference type="GO" id="GO:0006783">
    <property type="term" value="P:heme biosynthetic process"/>
    <property type="evidence" value="ECO:0000315"/>
    <property type="project" value="ZFIN"/>
</dbReference>
<dbReference type="GO" id="GO:0016226">
    <property type="term" value="P:iron-sulfur cluster assembly"/>
    <property type="evidence" value="ECO:0000318"/>
    <property type="project" value="GO_Central"/>
</dbReference>
<dbReference type="FunFam" id="2.60.300.12:FF:000001">
    <property type="entry name" value="Iron-binding protein IscA"/>
    <property type="match status" value="1"/>
</dbReference>
<dbReference type="Gene3D" id="2.60.300.12">
    <property type="entry name" value="HesB-like domain"/>
    <property type="match status" value="1"/>
</dbReference>
<dbReference type="InterPro" id="IPR050322">
    <property type="entry name" value="Fe-S_cluster_asmbl/transfer"/>
</dbReference>
<dbReference type="InterPro" id="IPR000361">
    <property type="entry name" value="FeS_biogenesis"/>
</dbReference>
<dbReference type="InterPro" id="IPR016092">
    <property type="entry name" value="FeS_cluster_insertion"/>
</dbReference>
<dbReference type="InterPro" id="IPR017870">
    <property type="entry name" value="FeS_cluster_insertion_CS"/>
</dbReference>
<dbReference type="InterPro" id="IPR035903">
    <property type="entry name" value="HesB-like_dom_sf"/>
</dbReference>
<dbReference type="NCBIfam" id="TIGR00049">
    <property type="entry name" value="iron-sulfur cluster assembly accessory protein"/>
    <property type="match status" value="1"/>
</dbReference>
<dbReference type="PANTHER" id="PTHR10072:SF41">
    <property type="entry name" value="IRON-SULFUR CLUSTER ASSEMBLY 1 HOMOLOG, MITOCHONDRIAL"/>
    <property type="match status" value="1"/>
</dbReference>
<dbReference type="PANTHER" id="PTHR10072">
    <property type="entry name" value="IRON-SULFUR CLUSTER ASSEMBLY PROTEIN"/>
    <property type="match status" value="1"/>
</dbReference>
<dbReference type="Pfam" id="PF01521">
    <property type="entry name" value="Fe-S_biosyn"/>
    <property type="match status" value="1"/>
</dbReference>
<dbReference type="SUPFAM" id="SSF89360">
    <property type="entry name" value="HesB-like domain"/>
    <property type="match status" value="1"/>
</dbReference>
<dbReference type="PROSITE" id="PS01152">
    <property type="entry name" value="HESB"/>
    <property type="match status" value="1"/>
</dbReference>
<accession>Q4QRC6</accession>
<organism>
    <name type="scientific">Danio rerio</name>
    <name type="common">Zebrafish</name>
    <name type="synonym">Brachydanio rerio</name>
    <dbReference type="NCBI Taxonomy" id="7955"/>
    <lineage>
        <taxon>Eukaryota</taxon>
        <taxon>Metazoa</taxon>
        <taxon>Chordata</taxon>
        <taxon>Craniata</taxon>
        <taxon>Vertebrata</taxon>
        <taxon>Euteleostomi</taxon>
        <taxon>Actinopterygii</taxon>
        <taxon>Neopterygii</taxon>
        <taxon>Teleostei</taxon>
        <taxon>Ostariophysi</taxon>
        <taxon>Cypriniformes</taxon>
        <taxon>Danionidae</taxon>
        <taxon>Danioninae</taxon>
        <taxon>Danio</taxon>
    </lineage>
</organism>
<name>ISCA1_DANRE</name>